<feature type="chain" id="PRO_0000211168" description="Bromodomain adjacent to zinc finger domain protein 1A">
    <location>
        <begin position="1"/>
        <end position="1555"/>
    </location>
</feature>
<feature type="domain" description="WAC" evidence="7">
    <location>
        <begin position="22"/>
        <end position="128"/>
    </location>
</feature>
<feature type="domain" description="DDT" evidence="5">
    <location>
        <begin position="422"/>
        <end position="488"/>
    </location>
</feature>
<feature type="domain" description="Bromo" evidence="4">
    <location>
        <begin position="1429"/>
        <end position="1532"/>
    </location>
</feature>
<feature type="zinc finger region" description="PHD-type" evidence="6">
    <location>
        <begin position="1149"/>
        <end position="1199"/>
    </location>
</feature>
<feature type="region of interest" description="Required for interaction with NCOR1" evidence="1">
    <location>
        <begin position="1"/>
        <end position="133"/>
    </location>
</feature>
<feature type="region of interest" description="Required for association with the CHRAC1/POLE3 complex" evidence="1">
    <location>
        <begin position="1"/>
        <end position="128"/>
    </location>
</feature>
<feature type="region of interest" description="Required for interaction with the CHRAC1-POLE3 heterodimer. Required for interaction with the CHRAC1-POLE3 heterodimer" evidence="2">
    <location>
        <begin position="1"/>
        <end position="128"/>
    </location>
</feature>
<feature type="region of interest" description="Disordered" evidence="8">
    <location>
        <begin position="652"/>
        <end position="751"/>
    </location>
</feature>
<feature type="region of interest" description="Interaction with SMARCA5" evidence="1">
    <location>
        <begin position="668"/>
        <end position="935"/>
    </location>
</feature>
<feature type="region of interest" description="Required for interaction with SMARCA5 and formation of the CHRAC ISWI chromatin remodeling complex" evidence="2">
    <location>
        <begin position="668"/>
        <end position="935"/>
    </location>
</feature>
<feature type="region of interest" description="Disordered" evidence="8">
    <location>
        <begin position="843"/>
        <end position="874"/>
    </location>
</feature>
<feature type="region of interest" description="Disordered" evidence="8">
    <location>
        <begin position="944"/>
        <end position="969"/>
    </location>
</feature>
<feature type="region of interest" description="Disordered" evidence="8">
    <location>
        <begin position="1203"/>
        <end position="1429"/>
    </location>
</feature>
<feature type="coiled-coil region" evidence="3">
    <location>
        <begin position="635"/>
        <end position="701"/>
    </location>
</feature>
<feature type="coiled-coil region" evidence="3">
    <location>
        <begin position="773"/>
        <end position="798"/>
    </location>
</feature>
<feature type="compositionally biased region" description="Basic and acidic residues" evidence="8">
    <location>
        <begin position="652"/>
        <end position="664"/>
    </location>
</feature>
<feature type="compositionally biased region" description="Basic and acidic residues" evidence="8">
    <location>
        <begin position="671"/>
        <end position="696"/>
    </location>
</feature>
<feature type="compositionally biased region" description="Acidic residues" evidence="8">
    <location>
        <begin position="705"/>
        <end position="714"/>
    </location>
</feature>
<feature type="compositionally biased region" description="Acidic residues" evidence="8">
    <location>
        <begin position="728"/>
        <end position="737"/>
    </location>
</feature>
<feature type="compositionally biased region" description="Low complexity" evidence="8">
    <location>
        <begin position="864"/>
        <end position="873"/>
    </location>
</feature>
<feature type="compositionally biased region" description="Acidic residues" evidence="8">
    <location>
        <begin position="1214"/>
        <end position="1258"/>
    </location>
</feature>
<feature type="compositionally biased region" description="Basic residues" evidence="8">
    <location>
        <begin position="1263"/>
        <end position="1277"/>
    </location>
</feature>
<feature type="compositionally biased region" description="Polar residues" evidence="8">
    <location>
        <begin position="1297"/>
        <end position="1313"/>
    </location>
</feature>
<feature type="compositionally biased region" description="Polar residues" evidence="8">
    <location>
        <begin position="1369"/>
        <end position="1386"/>
    </location>
</feature>
<feature type="modified residue" description="Phosphoserine" evidence="2">
    <location>
        <position position="270"/>
    </location>
</feature>
<feature type="modified residue" description="Phosphoserine" evidence="12">
    <location>
        <position position="284"/>
    </location>
</feature>
<feature type="modified residue" description="Phosphothreonine" evidence="11 12">
    <location>
        <position position="732"/>
    </location>
</feature>
<feature type="modified residue" description="Phosphoserine" evidence="12">
    <location>
        <position position="962"/>
    </location>
</feature>
<feature type="modified residue" description="Phosphoserine" evidence="12">
    <location>
        <position position="963"/>
    </location>
</feature>
<feature type="modified residue" description="Phosphoserine" evidence="2">
    <location>
        <position position="1282"/>
    </location>
</feature>
<feature type="modified residue" description="Phosphoserine" evidence="2">
    <location>
        <position position="1320"/>
    </location>
</feature>
<feature type="modified residue" description="Phosphoserine" evidence="12">
    <location>
        <position position="1339"/>
    </location>
</feature>
<feature type="modified residue" description="Phosphoserine" evidence="12">
    <location>
        <position position="1352"/>
    </location>
</feature>
<feature type="modified residue" description="Phosphoserine" evidence="2">
    <location>
        <position position="1370"/>
    </location>
</feature>
<feature type="modified residue" description="Phosphoserine" evidence="2">
    <location>
        <position position="1401"/>
    </location>
</feature>
<feature type="modified residue" description="Phosphoserine" evidence="12">
    <location>
        <position position="1412"/>
    </location>
</feature>
<feature type="modified residue" description="Phosphoserine" evidence="2">
    <location>
        <position position="1416"/>
    </location>
</feature>
<feature type="modified residue" description="Phosphothreonine" evidence="2">
    <location>
        <position position="1546"/>
    </location>
</feature>
<feature type="cross-link" description="Glycyl lysine isopeptide (Lys-Gly) (interchain with G-Cter in SUMO2)" evidence="2">
    <location>
        <position position="954"/>
    </location>
</feature>
<feature type="sequence conflict" description="In Ref. 3; AAC32043." evidence="10" ref="3">
    <original>LRP</original>
    <variation>EFR</variation>
    <location>
        <begin position="18"/>
        <end position="20"/>
    </location>
</feature>
<feature type="sequence conflict" description="In Ref. 2; BAE22607." evidence="10" ref="2">
    <original>FA</original>
    <variation>LL</variation>
    <location>
        <begin position="148"/>
        <end position="149"/>
    </location>
</feature>
<feature type="sequence conflict" description="In Ref. 3; AAC32043." evidence="10" ref="3">
    <original>KEDKEKKREELKKMVEEERL</original>
    <variation>AGILTPDQLVMVATGAQLEF</variation>
    <location>
        <begin position="342"/>
        <end position="361"/>
    </location>
</feature>
<protein>
    <recommendedName>
        <fullName>Bromodomain adjacent to zinc finger domain protein 1A</fullName>
    </recommendedName>
    <alternativeName>
        <fullName>Cbp146</fullName>
    </alternativeName>
</protein>
<organism>
    <name type="scientific">Mus musculus</name>
    <name type="common">Mouse</name>
    <dbReference type="NCBI Taxonomy" id="10090"/>
    <lineage>
        <taxon>Eukaryota</taxon>
        <taxon>Metazoa</taxon>
        <taxon>Chordata</taxon>
        <taxon>Craniata</taxon>
        <taxon>Vertebrata</taxon>
        <taxon>Euteleostomi</taxon>
        <taxon>Mammalia</taxon>
        <taxon>Eutheria</taxon>
        <taxon>Euarchontoglires</taxon>
        <taxon>Glires</taxon>
        <taxon>Rodentia</taxon>
        <taxon>Myomorpha</taxon>
        <taxon>Muroidea</taxon>
        <taxon>Muridae</taxon>
        <taxon>Murinae</taxon>
        <taxon>Mus</taxon>
        <taxon>Mus</taxon>
    </lineage>
</organism>
<reference key="1">
    <citation type="journal article" date="2009" name="PLoS Biol.">
        <title>Lineage-specific biology revealed by a finished genome assembly of the mouse.</title>
        <authorList>
            <person name="Church D.M."/>
            <person name="Goodstadt L."/>
            <person name="Hillier L.W."/>
            <person name="Zody M.C."/>
            <person name="Goldstein S."/>
            <person name="She X."/>
            <person name="Bult C.J."/>
            <person name="Agarwala R."/>
            <person name="Cherry J.L."/>
            <person name="DiCuccio M."/>
            <person name="Hlavina W."/>
            <person name="Kapustin Y."/>
            <person name="Meric P."/>
            <person name="Maglott D."/>
            <person name="Birtle Z."/>
            <person name="Marques A.C."/>
            <person name="Graves T."/>
            <person name="Zhou S."/>
            <person name="Teague B."/>
            <person name="Potamousis K."/>
            <person name="Churas C."/>
            <person name="Place M."/>
            <person name="Herschleb J."/>
            <person name="Runnheim R."/>
            <person name="Forrest D."/>
            <person name="Amos-Landgraf J."/>
            <person name="Schwartz D.C."/>
            <person name="Cheng Z."/>
            <person name="Lindblad-Toh K."/>
            <person name="Eichler E.E."/>
            <person name="Ponting C.P."/>
        </authorList>
    </citation>
    <scope>NUCLEOTIDE SEQUENCE [LARGE SCALE GENOMIC DNA]</scope>
    <source>
        <strain>C57BL/6J</strain>
    </source>
</reference>
<reference key="2">
    <citation type="journal article" date="2005" name="Science">
        <title>The transcriptional landscape of the mammalian genome.</title>
        <authorList>
            <person name="Carninci P."/>
            <person name="Kasukawa T."/>
            <person name="Katayama S."/>
            <person name="Gough J."/>
            <person name="Frith M.C."/>
            <person name="Maeda N."/>
            <person name="Oyama R."/>
            <person name="Ravasi T."/>
            <person name="Lenhard B."/>
            <person name="Wells C."/>
            <person name="Kodzius R."/>
            <person name="Shimokawa K."/>
            <person name="Bajic V.B."/>
            <person name="Brenner S.E."/>
            <person name="Batalov S."/>
            <person name="Forrest A.R."/>
            <person name="Zavolan M."/>
            <person name="Davis M.J."/>
            <person name="Wilming L.G."/>
            <person name="Aidinis V."/>
            <person name="Allen J.E."/>
            <person name="Ambesi-Impiombato A."/>
            <person name="Apweiler R."/>
            <person name="Aturaliya R.N."/>
            <person name="Bailey T.L."/>
            <person name="Bansal M."/>
            <person name="Baxter L."/>
            <person name="Beisel K.W."/>
            <person name="Bersano T."/>
            <person name="Bono H."/>
            <person name="Chalk A.M."/>
            <person name="Chiu K.P."/>
            <person name="Choudhary V."/>
            <person name="Christoffels A."/>
            <person name="Clutterbuck D.R."/>
            <person name="Crowe M.L."/>
            <person name="Dalla E."/>
            <person name="Dalrymple B.P."/>
            <person name="de Bono B."/>
            <person name="Della Gatta G."/>
            <person name="di Bernardo D."/>
            <person name="Down T."/>
            <person name="Engstrom P."/>
            <person name="Fagiolini M."/>
            <person name="Faulkner G."/>
            <person name="Fletcher C.F."/>
            <person name="Fukushima T."/>
            <person name="Furuno M."/>
            <person name="Futaki S."/>
            <person name="Gariboldi M."/>
            <person name="Georgii-Hemming P."/>
            <person name="Gingeras T.R."/>
            <person name="Gojobori T."/>
            <person name="Green R.E."/>
            <person name="Gustincich S."/>
            <person name="Harbers M."/>
            <person name="Hayashi Y."/>
            <person name="Hensch T.K."/>
            <person name="Hirokawa N."/>
            <person name="Hill D."/>
            <person name="Huminiecki L."/>
            <person name="Iacono M."/>
            <person name="Ikeo K."/>
            <person name="Iwama A."/>
            <person name="Ishikawa T."/>
            <person name="Jakt M."/>
            <person name="Kanapin A."/>
            <person name="Katoh M."/>
            <person name="Kawasawa Y."/>
            <person name="Kelso J."/>
            <person name="Kitamura H."/>
            <person name="Kitano H."/>
            <person name="Kollias G."/>
            <person name="Krishnan S.P."/>
            <person name="Kruger A."/>
            <person name="Kummerfeld S.K."/>
            <person name="Kurochkin I.V."/>
            <person name="Lareau L.F."/>
            <person name="Lazarevic D."/>
            <person name="Lipovich L."/>
            <person name="Liu J."/>
            <person name="Liuni S."/>
            <person name="McWilliam S."/>
            <person name="Madan Babu M."/>
            <person name="Madera M."/>
            <person name="Marchionni L."/>
            <person name="Matsuda H."/>
            <person name="Matsuzawa S."/>
            <person name="Miki H."/>
            <person name="Mignone F."/>
            <person name="Miyake S."/>
            <person name="Morris K."/>
            <person name="Mottagui-Tabar S."/>
            <person name="Mulder N."/>
            <person name="Nakano N."/>
            <person name="Nakauchi H."/>
            <person name="Ng P."/>
            <person name="Nilsson R."/>
            <person name="Nishiguchi S."/>
            <person name="Nishikawa S."/>
            <person name="Nori F."/>
            <person name="Ohara O."/>
            <person name="Okazaki Y."/>
            <person name="Orlando V."/>
            <person name="Pang K.C."/>
            <person name="Pavan W.J."/>
            <person name="Pavesi G."/>
            <person name="Pesole G."/>
            <person name="Petrovsky N."/>
            <person name="Piazza S."/>
            <person name="Reed J."/>
            <person name="Reid J.F."/>
            <person name="Ring B.Z."/>
            <person name="Ringwald M."/>
            <person name="Rost B."/>
            <person name="Ruan Y."/>
            <person name="Salzberg S.L."/>
            <person name="Sandelin A."/>
            <person name="Schneider C."/>
            <person name="Schoenbach C."/>
            <person name="Sekiguchi K."/>
            <person name="Semple C.A."/>
            <person name="Seno S."/>
            <person name="Sessa L."/>
            <person name="Sheng Y."/>
            <person name="Shibata Y."/>
            <person name="Shimada H."/>
            <person name="Shimada K."/>
            <person name="Silva D."/>
            <person name="Sinclair B."/>
            <person name="Sperling S."/>
            <person name="Stupka E."/>
            <person name="Sugiura K."/>
            <person name="Sultana R."/>
            <person name="Takenaka Y."/>
            <person name="Taki K."/>
            <person name="Tammoja K."/>
            <person name="Tan S.L."/>
            <person name="Tang S."/>
            <person name="Taylor M.S."/>
            <person name="Tegner J."/>
            <person name="Teichmann S.A."/>
            <person name="Ueda H.R."/>
            <person name="van Nimwegen E."/>
            <person name="Verardo R."/>
            <person name="Wei C.L."/>
            <person name="Yagi K."/>
            <person name="Yamanishi H."/>
            <person name="Zabarovsky E."/>
            <person name="Zhu S."/>
            <person name="Zimmer A."/>
            <person name="Hide W."/>
            <person name="Bult C."/>
            <person name="Grimmond S.M."/>
            <person name="Teasdale R.D."/>
            <person name="Liu E.T."/>
            <person name="Brusic V."/>
            <person name="Quackenbush J."/>
            <person name="Wahlestedt C."/>
            <person name="Mattick J.S."/>
            <person name="Hume D.A."/>
            <person name="Kai C."/>
            <person name="Sasaki D."/>
            <person name="Tomaru Y."/>
            <person name="Fukuda S."/>
            <person name="Kanamori-Katayama M."/>
            <person name="Suzuki M."/>
            <person name="Aoki J."/>
            <person name="Arakawa T."/>
            <person name="Iida J."/>
            <person name="Imamura K."/>
            <person name="Itoh M."/>
            <person name="Kato T."/>
            <person name="Kawaji H."/>
            <person name="Kawagashira N."/>
            <person name="Kawashima T."/>
            <person name="Kojima M."/>
            <person name="Kondo S."/>
            <person name="Konno H."/>
            <person name="Nakano K."/>
            <person name="Ninomiya N."/>
            <person name="Nishio T."/>
            <person name="Okada M."/>
            <person name="Plessy C."/>
            <person name="Shibata K."/>
            <person name="Shiraki T."/>
            <person name="Suzuki S."/>
            <person name="Tagami M."/>
            <person name="Waki K."/>
            <person name="Watahiki A."/>
            <person name="Okamura-Oho Y."/>
            <person name="Suzuki H."/>
            <person name="Kawai J."/>
            <person name="Hayashizaki Y."/>
        </authorList>
    </citation>
    <scope>NUCLEOTIDE SEQUENCE [LARGE SCALE MRNA] OF 1-382</scope>
    <source>
        <strain>C57BL/6J</strain>
        <tissue>Blastocyst</tissue>
        <tissue>Egg</tissue>
    </source>
</reference>
<reference key="3">
    <citation type="journal article" date="1998" name="J. Cell Sci.">
        <title>Capturing novel mouse genes encoding chromosomal and other nuclear proteins.</title>
        <authorList>
            <person name="Tate P."/>
            <person name="Lee M."/>
            <person name="Tweedie S."/>
            <person name="Skarnes W.C."/>
            <person name="Bickmore W.A."/>
        </authorList>
    </citation>
    <scope>NUCLEOTIDE SEQUENCE [MRNA] OF 18-361</scope>
</reference>
<reference key="4">
    <citation type="journal article" date="2002" name="Nat. Genet.">
        <title>An ACF1-ISWI chromatin-remodeling complex is required for DNA replication through heterochromatin.</title>
        <authorList>
            <person name="Collins N."/>
            <person name="Poot R.A."/>
            <person name="Kukimoto I."/>
            <person name="Garcia-Jimenez C."/>
            <person name="Dellaire G."/>
            <person name="Varga-Weisz P.D."/>
        </authorList>
    </citation>
    <scope>SUBCELLULAR LOCATION</scope>
</reference>
<reference key="5">
    <citation type="journal article" date="2009" name="Immunity">
        <title>The phagosomal proteome in interferon-gamma-activated macrophages.</title>
        <authorList>
            <person name="Trost M."/>
            <person name="English L."/>
            <person name="Lemieux S."/>
            <person name="Courcelles M."/>
            <person name="Desjardins M."/>
            <person name="Thibault P."/>
        </authorList>
    </citation>
    <scope>PHOSPHORYLATION [LARGE SCALE ANALYSIS] AT THR-732</scope>
    <scope>IDENTIFICATION BY MASS SPECTROMETRY [LARGE SCALE ANALYSIS]</scope>
</reference>
<reference key="6">
    <citation type="journal article" date="2010" name="Cell">
        <title>A tissue-specific atlas of mouse protein phosphorylation and expression.</title>
        <authorList>
            <person name="Huttlin E.L."/>
            <person name="Jedrychowski M.P."/>
            <person name="Elias J.E."/>
            <person name="Goswami T."/>
            <person name="Rad R."/>
            <person name="Beausoleil S.A."/>
            <person name="Villen J."/>
            <person name="Haas W."/>
            <person name="Sowa M.E."/>
            <person name="Gygi S.P."/>
        </authorList>
    </citation>
    <scope>PHOSPHORYLATION [LARGE SCALE ANALYSIS] AT SER-284; THR-732; SER-962; SER-963; SER-1339; SER-1352 AND SER-1412</scope>
    <scope>IDENTIFICATION BY MASS SPECTROMETRY [LARGE SCALE ANALYSIS]</scope>
    <source>
        <tissue>Kidney</tissue>
        <tissue>Lung</tissue>
        <tissue>Spleen</tissue>
        <tissue>Testis</tissue>
    </source>
</reference>
<dbReference type="EMBL" id="AC138767">
    <property type="status" value="NOT_ANNOTATED_CDS"/>
    <property type="molecule type" value="Genomic_DNA"/>
</dbReference>
<dbReference type="EMBL" id="AC154732">
    <property type="status" value="NOT_ANNOTATED_CDS"/>
    <property type="molecule type" value="Genomic_DNA"/>
</dbReference>
<dbReference type="EMBL" id="CT030142">
    <property type="status" value="NOT_ANNOTATED_CDS"/>
    <property type="molecule type" value="Genomic_DNA"/>
</dbReference>
<dbReference type="EMBL" id="AK135668">
    <property type="protein sequence ID" value="BAE22607.1"/>
    <property type="status" value="ALT_INIT"/>
    <property type="molecule type" value="mRNA"/>
</dbReference>
<dbReference type="EMBL" id="AK166955">
    <property type="protein sequence ID" value="BAE39138.1"/>
    <property type="molecule type" value="mRNA"/>
</dbReference>
<dbReference type="EMBL" id="AF033664">
    <property type="protein sequence ID" value="AAC32043.1"/>
    <property type="molecule type" value="mRNA"/>
</dbReference>
<dbReference type="SMR" id="O88379"/>
<dbReference type="ComplexPortal" id="CPX-444">
    <property type="entry name" value="ACF chromatin remodeling complex"/>
</dbReference>
<dbReference type="ComplexPortal" id="CPX-858">
    <property type="entry name" value="CHRAC chromatin remodeling complex"/>
</dbReference>
<dbReference type="FunCoup" id="O88379">
    <property type="interactions" value="1891"/>
</dbReference>
<dbReference type="IntAct" id="O88379">
    <property type="interactions" value="2"/>
</dbReference>
<dbReference type="STRING" id="10090.ENSMUSP00000133478"/>
<dbReference type="GlyGen" id="O88379">
    <property type="glycosylation" value="3 sites, 1 O-linked glycan (2 sites)"/>
</dbReference>
<dbReference type="iPTMnet" id="O88379"/>
<dbReference type="PhosphoSitePlus" id="O88379"/>
<dbReference type="SwissPalm" id="O88379"/>
<dbReference type="jPOST" id="O88379"/>
<dbReference type="PaxDb" id="10090-ENSMUSP00000039757"/>
<dbReference type="PeptideAtlas" id="O88379"/>
<dbReference type="ProteomicsDB" id="273730"/>
<dbReference type="Pumba" id="O88379"/>
<dbReference type="Antibodypedia" id="113">
    <property type="antibodies" value="142 antibodies from 26 providers"/>
</dbReference>
<dbReference type="AGR" id="MGI:1309478"/>
<dbReference type="MGI" id="MGI:1309478">
    <property type="gene designation" value="Baz1a"/>
</dbReference>
<dbReference type="VEuPathDB" id="HostDB:ENSMUSG00000035021"/>
<dbReference type="eggNOG" id="KOG1245">
    <property type="taxonomic scope" value="Eukaryota"/>
</dbReference>
<dbReference type="InParanoid" id="O88379"/>
<dbReference type="OrthoDB" id="332390at2759"/>
<dbReference type="PhylomeDB" id="O88379"/>
<dbReference type="TreeFam" id="TF316326"/>
<dbReference type="ChiTaRS" id="Baz1a">
    <property type="organism name" value="mouse"/>
</dbReference>
<dbReference type="PRO" id="PR:O88379"/>
<dbReference type="Proteomes" id="UP000000589">
    <property type="component" value="Chromosome 12"/>
</dbReference>
<dbReference type="RNAct" id="O88379">
    <property type="molecule type" value="protein"/>
</dbReference>
<dbReference type="Bgee" id="ENSMUSG00000035021">
    <property type="expression patterns" value="Expressed in spermatocyte and 178 other cell types or tissues"/>
</dbReference>
<dbReference type="ExpressionAtlas" id="O88379">
    <property type="expression patterns" value="baseline and differential"/>
</dbReference>
<dbReference type="GO" id="GO:0016590">
    <property type="term" value="C:ACF complex"/>
    <property type="evidence" value="ECO:0000266"/>
    <property type="project" value="ComplexPortal"/>
</dbReference>
<dbReference type="GO" id="GO:0008623">
    <property type="term" value="C:CHRAC"/>
    <property type="evidence" value="ECO:0000303"/>
    <property type="project" value="ComplexPortal"/>
</dbReference>
<dbReference type="GO" id="GO:0000228">
    <property type="term" value="C:nuclear chromosome"/>
    <property type="evidence" value="ECO:0000314"/>
    <property type="project" value="MGI"/>
</dbReference>
<dbReference type="GO" id="GO:0005634">
    <property type="term" value="C:nucleus"/>
    <property type="evidence" value="ECO:0000266"/>
    <property type="project" value="ComplexPortal"/>
</dbReference>
<dbReference type="GO" id="GO:0005721">
    <property type="term" value="C:pericentric heterochromatin"/>
    <property type="evidence" value="ECO:0000314"/>
    <property type="project" value="ComplexPortal"/>
</dbReference>
<dbReference type="GO" id="GO:0008270">
    <property type="term" value="F:zinc ion binding"/>
    <property type="evidence" value="ECO:0007669"/>
    <property type="project" value="UniProtKB-KW"/>
</dbReference>
<dbReference type="GO" id="GO:0006338">
    <property type="term" value="P:chromatin remodeling"/>
    <property type="evidence" value="ECO:0000266"/>
    <property type="project" value="ComplexPortal"/>
</dbReference>
<dbReference type="GO" id="GO:0006334">
    <property type="term" value="P:nucleosome assembly"/>
    <property type="evidence" value="ECO:0000266"/>
    <property type="project" value="ComplexPortal"/>
</dbReference>
<dbReference type="GO" id="GO:0045740">
    <property type="term" value="P:positive regulation of DNA replication"/>
    <property type="evidence" value="ECO:0000315"/>
    <property type="project" value="ComplexPortal"/>
</dbReference>
<dbReference type="GO" id="GO:0006275">
    <property type="term" value="P:regulation of DNA replication"/>
    <property type="evidence" value="ECO:0000266"/>
    <property type="project" value="ComplexPortal"/>
</dbReference>
<dbReference type="CDD" id="cd05504">
    <property type="entry name" value="Bromo_Acf1_like"/>
    <property type="match status" value="1"/>
</dbReference>
<dbReference type="CDD" id="cd15627">
    <property type="entry name" value="PHD_BAZ1A"/>
    <property type="match status" value="1"/>
</dbReference>
<dbReference type="CDD" id="cd22249">
    <property type="entry name" value="UDM1_RNF168_RNF169-like"/>
    <property type="match status" value="1"/>
</dbReference>
<dbReference type="FunFam" id="1.20.920.10:FF:000029">
    <property type="entry name" value="Bromodomain adjacent to zinc finger domain protein 1A"/>
    <property type="match status" value="1"/>
</dbReference>
<dbReference type="FunFam" id="3.30.40.10:FF:000300">
    <property type="entry name" value="Bromodomain adjacent to zinc finger domain protein 1A"/>
    <property type="match status" value="1"/>
</dbReference>
<dbReference type="Gene3D" id="1.20.920.10">
    <property type="entry name" value="Bromodomain-like"/>
    <property type="match status" value="1"/>
</dbReference>
<dbReference type="Gene3D" id="3.30.40.10">
    <property type="entry name" value="Zinc/RING finger domain, C3HC4 (zinc finger)"/>
    <property type="match status" value="1"/>
</dbReference>
<dbReference type="InterPro" id="IPR037325">
    <property type="entry name" value="Acf1_Bromo"/>
</dbReference>
<dbReference type="InterPro" id="IPR047171">
    <property type="entry name" value="BAZ1A"/>
</dbReference>
<dbReference type="InterPro" id="IPR001487">
    <property type="entry name" value="Bromodomain"/>
</dbReference>
<dbReference type="InterPro" id="IPR036427">
    <property type="entry name" value="Bromodomain-like_sf"/>
</dbReference>
<dbReference type="InterPro" id="IPR018359">
    <property type="entry name" value="Bromodomain_CS"/>
</dbReference>
<dbReference type="InterPro" id="IPR018501">
    <property type="entry name" value="DDT_dom"/>
</dbReference>
<dbReference type="InterPro" id="IPR028942">
    <property type="entry name" value="WHIM1_dom"/>
</dbReference>
<dbReference type="InterPro" id="IPR028941">
    <property type="entry name" value="WHIM2_dom"/>
</dbReference>
<dbReference type="InterPro" id="IPR013136">
    <property type="entry name" value="WSTF_Acf1_Cbp146"/>
</dbReference>
<dbReference type="InterPro" id="IPR019786">
    <property type="entry name" value="Zinc_finger_PHD-type_CS"/>
</dbReference>
<dbReference type="InterPro" id="IPR011011">
    <property type="entry name" value="Znf_FYVE_PHD"/>
</dbReference>
<dbReference type="InterPro" id="IPR001965">
    <property type="entry name" value="Znf_PHD"/>
</dbReference>
<dbReference type="InterPro" id="IPR019787">
    <property type="entry name" value="Znf_PHD-finger"/>
</dbReference>
<dbReference type="InterPro" id="IPR013083">
    <property type="entry name" value="Znf_RING/FYVE/PHD"/>
</dbReference>
<dbReference type="PANTHER" id="PTHR46510">
    <property type="entry name" value="BROMODOMAIN ADJACENT TO ZINC FINGER DOMAIN PROTEIN 1A"/>
    <property type="match status" value="1"/>
</dbReference>
<dbReference type="PANTHER" id="PTHR46510:SF1">
    <property type="entry name" value="BROMODOMAIN ADJACENT TO ZINC FINGER DOMAIN PROTEIN 1A"/>
    <property type="match status" value="1"/>
</dbReference>
<dbReference type="Pfam" id="PF00439">
    <property type="entry name" value="Bromodomain"/>
    <property type="match status" value="1"/>
</dbReference>
<dbReference type="Pfam" id="PF02791">
    <property type="entry name" value="DDT"/>
    <property type="match status" value="1"/>
</dbReference>
<dbReference type="Pfam" id="PF00628">
    <property type="entry name" value="PHD"/>
    <property type="match status" value="1"/>
</dbReference>
<dbReference type="Pfam" id="PF10537">
    <property type="entry name" value="WAC_Acf1_DNA_bd"/>
    <property type="match status" value="1"/>
</dbReference>
<dbReference type="Pfam" id="PF15612">
    <property type="entry name" value="WHIM1"/>
    <property type="match status" value="1"/>
</dbReference>
<dbReference type="Pfam" id="PF15613">
    <property type="entry name" value="WSD"/>
    <property type="match status" value="1"/>
</dbReference>
<dbReference type="PRINTS" id="PR00503">
    <property type="entry name" value="BROMODOMAIN"/>
</dbReference>
<dbReference type="SMART" id="SM00297">
    <property type="entry name" value="BROMO"/>
    <property type="match status" value="1"/>
</dbReference>
<dbReference type="SMART" id="SM00571">
    <property type="entry name" value="DDT"/>
    <property type="match status" value="1"/>
</dbReference>
<dbReference type="SMART" id="SM00249">
    <property type="entry name" value="PHD"/>
    <property type="match status" value="1"/>
</dbReference>
<dbReference type="SUPFAM" id="SSF47370">
    <property type="entry name" value="Bromodomain"/>
    <property type="match status" value="1"/>
</dbReference>
<dbReference type="SUPFAM" id="SSF57903">
    <property type="entry name" value="FYVE/PHD zinc finger"/>
    <property type="match status" value="1"/>
</dbReference>
<dbReference type="PROSITE" id="PS00633">
    <property type="entry name" value="BROMODOMAIN_1"/>
    <property type="match status" value="1"/>
</dbReference>
<dbReference type="PROSITE" id="PS50014">
    <property type="entry name" value="BROMODOMAIN_2"/>
    <property type="match status" value="1"/>
</dbReference>
<dbReference type="PROSITE" id="PS50827">
    <property type="entry name" value="DDT"/>
    <property type="match status" value="1"/>
</dbReference>
<dbReference type="PROSITE" id="PS51136">
    <property type="entry name" value="WAC"/>
    <property type="match status" value="1"/>
</dbReference>
<dbReference type="PROSITE" id="PS01359">
    <property type="entry name" value="ZF_PHD_1"/>
    <property type="match status" value="1"/>
</dbReference>
<dbReference type="PROSITE" id="PS50016">
    <property type="entry name" value="ZF_PHD_2"/>
    <property type="match status" value="1"/>
</dbReference>
<proteinExistence type="evidence at protein level"/>
<evidence type="ECO:0000250" key="1"/>
<evidence type="ECO:0000250" key="2">
    <source>
        <dbReference type="UniProtKB" id="Q9NRL2"/>
    </source>
</evidence>
<evidence type="ECO:0000255" key="3"/>
<evidence type="ECO:0000255" key="4">
    <source>
        <dbReference type="PROSITE-ProRule" id="PRU00035"/>
    </source>
</evidence>
<evidence type="ECO:0000255" key="5">
    <source>
        <dbReference type="PROSITE-ProRule" id="PRU00063"/>
    </source>
</evidence>
<evidence type="ECO:0000255" key="6">
    <source>
        <dbReference type="PROSITE-ProRule" id="PRU00146"/>
    </source>
</evidence>
<evidence type="ECO:0000255" key="7">
    <source>
        <dbReference type="PROSITE-ProRule" id="PRU00475"/>
    </source>
</evidence>
<evidence type="ECO:0000256" key="8">
    <source>
        <dbReference type="SAM" id="MobiDB-lite"/>
    </source>
</evidence>
<evidence type="ECO:0000269" key="9">
    <source>
    </source>
</evidence>
<evidence type="ECO:0000305" key="10"/>
<evidence type="ECO:0007744" key="11">
    <source>
    </source>
</evidence>
<evidence type="ECO:0007744" key="12">
    <source>
    </source>
</evidence>
<name>BAZ1A_MOUSE</name>
<keyword id="KW-0103">Bromodomain</keyword>
<keyword id="KW-0175">Coiled coil</keyword>
<keyword id="KW-1017">Isopeptide bond</keyword>
<keyword id="KW-0479">Metal-binding</keyword>
<keyword id="KW-0539">Nucleus</keyword>
<keyword id="KW-0597">Phosphoprotein</keyword>
<keyword id="KW-1185">Reference proteome</keyword>
<keyword id="KW-0804">Transcription</keyword>
<keyword id="KW-0805">Transcription regulation</keyword>
<keyword id="KW-0832">Ubl conjugation</keyword>
<keyword id="KW-0862">Zinc</keyword>
<keyword id="KW-0863">Zinc-finger</keyword>
<comment type="function">
    <text evidence="2">Regulatory subunit of the ATP-dependent ACF-1 and ACF-5 ISWI chromatin remodeling complexes, which form ordered nucleosome arrays on chromatin and slide edge- and center-positioned histone octamers away from their original location on the DNA template to facilitate access to DNA during DNA-templated processes such as DNA replication, transcription, and repair (By similarity). Both complexes regulate the spacing of nucleosomes along the chromatin and have the ability to slide mononucleosomes to the center of a DNA template in an ATP-dependent manner (By similarity). The ACF-1 ISWI chromatin remodeling complex has a lower ATP hydrolysis rate than the ACF-5 ISWI chromatin remodeling complex (By similarity). Has a role in sensing the length of DNA which flank nucleosomes, which modulates the nucleosome spacing activity of the ACF-5 ISWI chromatin remodeling complex (By similarity). Involved in DNA replication and together with SMARCA5/SNF2H is required for replication of pericentric heterochromatin in S-phase (By similarity). May have a role in nuclear receptor-mediated transcription repression (By similarity).</text>
</comment>
<comment type="subunit">
    <text evidence="2">Component of the ACF-1 ISWI chromatin remodeling complex at least composed of SMARCA1 and BAZ1A, which regulates the spacing of histone octamers on the DNA template to facilitate access to DNA (By similarity). Within the ACF-1 ISWI chromatin remodeling complex interacts with SMARCA1; the interaction is direct (By similarity). Component of the ACF-5 ISWI chromatin remodeling complex (also called the ACF complex) at least composed of BAZ1A and SMARCA5/SNF2H, which regulates the spacing of histone octamers on the DNA template to facilitate access to DNA (By similarity). Within the ACF-5 ISWI chromatin remodeling complex interacts with SMARCA5/SNF2H; the interaction is direct (By similarity). Component of the CHRAC ISWI chromatin remodeling complex at least composed of SMARCA5/SNF2H, BAZ1A/ACF1, CHRAC1 and POLE3; the complex preferentially binds DNA through the CHRAC1-POLE3 heterodimer and possesses ATP-dependent nucleosome-remodeling activity (By similarity). Within the complex interacts (via N-terminus) with POLE3-CHRAC1 heterodimer; the interaction is direct and is required for the complex to preferentially bind to DNA (By similarity). Within the complex interacts with SMARCA5/SNF2H; the interaction is direct and promotes the interaction with the POLE3-CHRAC1 heterodimer (By similarity). Interacts with NCOR1 (via its RD1 domain); the interaction corepresses a number of NCOR1-regulated genes (By similarity).</text>
</comment>
<comment type="subcellular location">
    <subcellularLocation>
        <location evidence="9">Nucleus</location>
    </subcellularLocation>
    <text evidence="2 9">Localizes to pericentric heterochromatin (PubMed:12434153). May target the CHRAC complex to heterochromatin (By similarity). Localizes to sites of DNA damage (By similarity).</text>
</comment>
<comment type="similarity">
    <text evidence="10">Belongs to the WAL family.</text>
</comment>
<comment type="sequence caution" evidence="10">
    <conflict type="erroneous initiation">
        <sequence resource="EMBL-CDS" id="BAE22607"/>
    </conflict>
    <text>Extended N-terminus.</text>
</comment>
<sequence length="1555" mass="178459">MPLLHRKPFVRQKPPGDLRPDEEVFYCKVTNEIFRHYDDFFERTILCNSLVWSCAVTGRPGLTYQEALESERKARQNLQSFPEPLIIPVLYLTNLTRRSRLHEICDDIFAYVKDRYFVEETVEVIRNNGTRLQCRILEVLPPLHQNGFANGHLSSADGETIVISDSDDSETQSSSFHHGKKKDAIDPLLFRYRVQPTKKEMYESAVVKATQISRRKHLFSRDKLKLFLKQHCEAQDGVIKIKASSFSAYNIAEQDFSYFFPDDPPTFIFSPANRRRGRPPKRISFGQEDSIASKQTAARYRNKAIKERDKLLKQEEMRALAFEKAKLKRERADALEARKREKEDKEKKREELKKMVEEERLKKKEEKERLKIEREKEREKLREEKRKYMEYLKQWSKPREDMECDDLKELPEPTPVKTRLPPEVFGDALMVLEFLNAFGELFDLQDEFPEGVTLAEVLEEALVGNDSEGPLCELLFFFLTAIFQAMAEEEEEVAKEQITDADTKDLTEALDEDADPTKSALSAVAALAAAWPQLHQGCSLKSLDLDSCTLSEILRLHILASGADVTSANAKYRYQKRGGFDATDDACMELRLSNPSLVKKLSSTSVYDLTPGEKMKILHALCGKLLTLVSTRDFIEDYVDVLRQAKQEFRELKAEQHRKEREATAARIRRRKEEKLKEQEQKMKEKQEKLKEDEQRNSAAVPGYGEEEREDFDTSTENKNIEQKDLDPDVVTEDEDDPGSHKRSRRGKVGQTAVKQCIKQEEMNYCIKQEPLSADAEEALRQEQQQKEKELLDKIQSAIACTNIFPLGRDRLYRRYWIFPSIPGLFIEEDYSGLTEDMLLPRPSSFHNNAQPRDPQVSIKTEESFLSESTSSLDQGPFDDSVLLPKPVHKPNRWCFYSSCAQLDQLIDALNSRGHRESALKETLLQEKSRICAQLAHFSEEKFHFSDKPQADSKPVSSRGRSSGACDISQMSAERQLELRLRDFLLDIEDRIYQGTLGAIKVTDRQVWRSALENGRYELLSEESKENGVIKTVNEDVEEMEMEQARVIVRDRLLGIKTETPSTISTSASTPQSVSNVVHYLALALFQIEQGIERRFLKAPLDGNDSGRSYKTVLDRWRESLLSSASLSQVFLHLSTLDRSVMWSKSILNARCKICRKKGDAENMVLCDGCDRGHHTYCVRPKLKAVPDGDWFCPECRPKQRSRRLSSRQRPSLESDEEMEEGMEDDDDEVDDDDEEGQSEEEEYEVEQDEEDSDDDEALSPPKRGRPQVRLPIKTKGRFGPSFPSRSQRQDPGRYPSRSQQSTPKNTAKSASKNLRKTRSAPPTETRSLRVGSRSTRHSPSALQDVFVELLSPHSKRRGRKGADHTPEHSPSFTNFRVSTSRSSRQLIPLNTAESLSLQHSESKRRGRKRQSTESSPVPLNRRSSGRQGGVHELSAFEQLVVELVRHDDSWPFLKLVSKIQVPDYYDIIKKPIALNIIREKVNKCEYKLASEFIDDIELMFSNCFEYNPRNTSEAKAGTRLQAFFHIQAQKLGLHVSPSTVDQVSTPLAAKKSRI</sequence>
<accession>O88379</accession>
<accession>Q3TKK7</accession>
<accession>Q3UXF6</accession>
<gene>
    <name type="primary">Baz1a</name>
    <name type="synonym">Cbp146</name>
</gene>